<evidence type="ECO:0000250" key="1"/>
<evidence type="ECO:0000255" key="2"/>
<evidence type="ECO:0000255" key="3">
    <source>
        <dbReference type="PROSITE-ProRule" id="PRU01070"/>
    </source>
</evidence>
<evidence type="ECO:0000269" key="4">
    <source>
    </source>
</evidence>
<evidence type="ECO:0000305" key="5"/>
<evidence type="ECO:0007829" key="6">
    <source>
        <dbReference type="PDB" id="6BBK"/>
    </source>
</evidence>
<proteinExistence type="evidence at protein level"/>
<comment type="subunit">
    <text>The pili are polar flexible filaments of about 5.4 nanometers diameter and 2.5 micrometers average length; they consist of only a single polypeptide chain arranged in a helical configuration of five subunits per turn in the assembled pilus.</text>
</comment>
<comment type="subcellular location">
    <subcellularLocation>
        <location>Fimbrium</location>
    </subcellularLocation>
    <subcellularLocation>
        <location evidence="2">Membrane</location>
        <topology evidence="2">Single-pass membrane protein</topology>
    </subcellularLocation>
</comment>
<comment type="PTM">
    <text evidence="4">O-glycosylated; glycan consists of 5NbetaOHC47NFmPse(alpha2-4)Xyl(beta1-3)FucNAc in beta1-O linkage to Ser.</text>
</comment>
<comment type="similarity">
    <text evidence="5">Belongs to the N-Me-Phe pilin family.</text>
</comment>
<dbReference type="EMBL" id="X83916">
    <property type="protein sequence ID" value="CAA58768.1"/>
    <property type="molecule type" value="Genomic_DNA"/>
</dbReference>
<dbReference type="PIR" id="S04440">
    <property type="entry name" value="S04440"/>
</dbReference>
<dbReference type="RefSeq" id="WP_058150672.1">
    <property type="nucleotide sequence ID" value="NZ_CP013696.1"/>
</dbReference>
<dbReference type="PDB" id="6BBK">
    <property type="method" value="X-ray"/>
    <property type="resolution" value="1.73 A"/>
    <property type="chains" value="A=34-154"/>
</dbReference>
<dbReference type="PDBsum" id="6BBK"/>
<dbReference type="SMR" id="P18774"/>
<dbReference type="GlyConnect" id="163">
    <property type="glycosylation" value="1 O-Linked glycan"/>
</dbReference>
<dbReference type="GlyCosmos" id="P18774">
    <property type="glycosylation" value="1 site, No reported glycans"/>
</dbReference>
<dbReference type="iPTMnet" id="P18774"/>
<dbReference type="GO" id="GO:0016020">
    <property type="term" value="C:membrane"/>
    <property type="evidence" value="ECO:0007669"/>
    <property type="project" value="UniProtKB-SubCell"/>
</dbReference>
<dbReference type="GO" id="GO:0009289">
    <property type="term" value="C:pilus"/>
    <property type="evidence" value="ECO:0007669"/>
    <property type="project" value="UniProtKB-SubCell"/>
</dbReference>
<dbReference type="GO" id="GO:0015627">
    <property type="term" value="C:type II protein secretion system complex"/>
    <property type="evidence" value="ECO:0007669"/>
    <property type="project" value="InterPro"/>
</dbReference>
<dbReference type="GO" id="GO:0007155">
    <property type="term" value="P:cell adhesion"/>
    <property type="evidence" value="ECO:0007669"/>
    <property type="project" value="InterPro"/>
</dbReference>
<dbReference type="GO" id="GO:0015628">
    <property type="term" value="P:protein secretion by the type II secretion system"/>
    <property type="evidence" value="ECO:0007669"/>
    <property type="project" value="InterPro"/>
</dbReference>
<dbReference type="Gene3D" id="3.30.700.10">
    <property type="entry name" value="Glycoprotein, Type 4 Pilin"/>
    <property type="match status" value="1"/>
</dbReference>
<dbReference type="InterPro" id="IPR000983">
    <property type="entry name" value="Bac_GSPG_pilin"/>
</dbReference>
<dbReference type="InterPro" id="IPR012902">
    <property type="entry name" value="N_methyl_site"/>
</dbReference>
<dbReference type="InterPro" id="IPR001082">
    <property type="entry name" value="Pilin"/>
</dbReference>
<dbReference type="InterPro" id="IPR045584">
    <property type="entry name" value="Pilin-like"/>
</dbReference>
<dbReference type="InterPro" id="IPR050470">
    <property type="entry name" value="T4P/T2SS_Core"/>
</dbReference>
<dbReference type="NCBIfam" id="TIGR02532">
    <property type="entry name" value="IV_pilin_GFxxxE"/>
    <property type="match status" value="1"/>
</dbReference>
<dbReference type="PANTHER" id="PTHR30093">
    <property type="entry name" value="GENERAL SECRETION PATHWAY PROTEIN G"/>
    <property type="match status" value="1"/>
</dbReference>
<dbReference type="PANTHER" id="PTHR30093:SF34">
    <property type="entry name" value="PREPILIN PEPTIDASE-DEPENDENT PROTEIN D"/>
    <property type="match status" value="1"/>
</dbReference>
<dbReference type="Pfam" id="PF07963">
    <property type="entry name" value="N_methyl"/>
    <property type="match status" value="1"/>
</dbReference>
<dbReference type="Pfam" id="PF00114">
    <property type="entry name" value="Pilin"/>
    <property type="match status" value="1"/>
</dbReference>
<dbReference type="PRINTS" id="PR00813">
    <property type="entry name" value="BCTERIALGSPG"/>
</dbReference>
<dbReference type="SUPFAM" id="SSF54523">
    <property type="entry name" value="Pili subunits"/>
    <property type="match status" value="1"/>
</dbReference>
<dbReference type="PROSITE" id="PS00409">
    <property type="entry name" value="PROKAR_NTER_METHYL"/>
    <property type="match status" value="1"/>
</dbReference>
<name>FM12_PSEAI</name>
<sequence>MKAQKGFTLIELMIVVAIIGILAAIAIPQYQDYTARTQVTRAVSEVSALKTAAESAILEGKEIVSSATPKDTQYDIGFTESTLLDGSGKSQIQVTDNQDGTVELVATLGKSSGSAIKGAVITVSRKNDGVWNCKITKTPTAWKPNYAPANCPKS</sequence>
<organism>
    <name type="scientific">Pseudomonas aeruginosa</name>
    <dbReference type="NCBI Taxonomy" id="287"/>
    <lineage>
        <taxon>Bacteria</taxon>
        <taxon>Pseudomonadati</taxon>
        <taxon>Pseudomonadota</taxon>
        <taxon>Gammaproteobacteria</taxon>
        <taxon>Pseudomonadales</taxon>
        <taxon>Pseudomonadaceae</taxon>
        <taxon>Pseudomonas</taxon>
    </lineage>
</organism>
<accession>P18774</accession>
<reference key="1">
    <citation type="journal article" date="1989" name="Mol. Gen. Genet.">
        <title>Cloning and sequencing of the Pseudomonas aeruginosa 1244 pilin structural gene.</title>
        <authorList>
            <person name="Castric P.A."/>
            <person name="Sidberry H.F."/>
            <person name="Sadoff J.C."/>
        </authorList>
    </citation>
    <scope>NUCLEOTIDE SEQUENCE [GENOMIC DNA]</scope>
    <source>
        <strain>1244</strain>
    </source>
</reference>
<reference key="2">
    <citation type="journal article" date="2001" name="J. Biol. Chem.">
        <title>Structural characterization of the Pseudomonas aeruginosa 1244 pilin glycan.</title>
        <authorList>
            <person name="Castric P."/>
            <person name="Cassels F.J."/>
            <person name="Carlson R.W."/>
        </authorList>
    </citation>
    <scope>STRUCTURE OF O-LINKED CARBOHYDRATE</scope>
    <source>
        <strain>1244</strain>
    </source>
</reference>
<reference key="3">
    <citation type="journal article" date="2002" name="Infect. Immun.">
        <title>Identification of the Pseudomonas aeruginosa 1244 pilin glycosylation site.</title>
        <authorList>
            <person name="Comer J.E."/>
            <person name="Marshall M.A."/>
            <person name="Blanch V.J."/>
            <person name="Deal C.D."/>
            <person name="Castric P."/>
        </authorList>
    </citation>
    <scope>GLYCOSYLATION AT SER-154</scope>
    <scope>MUTAGENESIS OF SER-154</scope>
    <source>
        <strain>1244</strain>
    </source>
</reference>
<feature type="propeptide" id="PRO_0000024166" description="Leader sequence" evidence="3">
    <location>
        <begin position="1"/>
        <end position="6"/>
    </location>
</feature>
<feature type="chain" id="PRO_0000024167" description="Fimbrial protein">
    <location>
        <begin position="7"/>
        <end position="154"/>
    </location>
</feature>
<feature type="transmembrane region" description="Helical" evidence="2">
    <location>
        <begin position="7"/>
        <end position="27"/>
    </location>
</feature>
<feature type="modified residue" description="N-methylphenylalanine" evidence="3">
    <location>
        <position position="7"/>
    </location>
</feature>
<feature type="glycosylation site" description="O-linked (FucNAc...) serine" evidence="4">
    <location>
        <position position="154"/>
    </location>
</feature>
<feature type="disulfide bond" evidence="1">
    <location>
        <begin position="133"/>
        <end position="151"/>
    </location>
</feature>
<feature type="mutagenesis site" description="Loss of glycosylation." evidence="4">
    <original>S</original>
    <variation>A</variation>
    <location>
        <position position="154"/>
    </location>
</feature>
<feature type="helix" evidence="6">
    <location>
        <begin position="34"/>
        <end position="47"/>
    </location>
</feature>
<feature type="helix" evidence="6">
    <location>
        <begin position="50"/>
        <end position="59"/>
    </location>
</feature>
<feature type="strand" evidence="6">
    <location>
        <begin position="62"/>
        <end position="64"/>
    </location>
</feature>
<feature type="strand" evidence="6">
    <location>
        <begin position="73"/>
        <end position="75"/>
    </location>
</feature>
<feature type="strand" evidence="6">
    <location>
        <begin position="84"/>
        <end position="87"/>
    </location>
</feature>
<feature type="helix" evidence="6">
    <location>
        <begin position="88"/>
        <end position="91"/>
    </location>
</feature>
<feature type="strand" evidence="6">
    <location>
        <begin position="92"/>
        <end position="96"/>
    </location>
</feature>
<feature type="strand" evidence="6">
    <location>
        <begin position="98"/>
        <end position="100"/>
    </location>
</feature>
<feature type="strand" evidence="6">
    <location>
        <begin position="102"/>
        <end position="108"/>
    </location>
</feature>
<feature type="turn" evidence="6">
    <location>
        <begin position="114"/>
        <end position="118"/>
    </location>
</feature>
<feature type="strand" evidence="6">
    <location>
        <begin position="120"/>
        <end position="125"/>
    </location>
</feature>
<feature type="strand" evidence="6">
    <location>
        <begin position="131"/>
        <end position="137"/>
    </location>
</feature>
<feature type="helix" evidence="6">
    <location>
        <begin position="144"/>
        <end position="146"/>
    </location>
</feature>
<gene>
    <name type="primary">pilA</name>
    <name type="synonym">fimA</name>
</gene>
<protein>
    <recommendedName>
        <fullName>Fimbrial protein</fullName>
    </recommendedName>
    <alternativeName>
        <fullName>Pilin</fullName>
    </alternativeName>
</protein>
<keyword id="KW-0002">3D-structure</keyword>
<keyword id="KW-1015">Disulfide bond</keyword>
<keyword id="KW-0281">Fimbrium</keyword>
<keyword id="KW-0325">Glycoprotein</keyword>
<keyword id="KW-0472">Membrane</keyword>
<keyword id="KW-0488">Methylation</keyword>
<keyword id="KW-0812">Transmembrane</keyword>
<keyword id="KW-1133">Transmembrane helix</keyword>